<organism>
    <name type="scientific">Phenylobacterium zucineum (strain HLK1)</name>
    <dbReference type="NCBI Taxonomy" id="450851"/>
    <lineage>
        <taxon>Bacteria</taxon>
        <taxon>Pseudomonadati</taxon>
        <taxon>Pseudomonadota</taxon>
        <taxon>Alphaproteobacteria</taxon>
        <taxon>Caulobacterales</taxon>
        <taxon>Caulobacteraceae</taxon>
        <taxon>Phenylobacterium</taxon>
    </lineage>
</organism>
<gene>
    <name evidence="1" type="primary">prfB</name>
    <name type="ordered locus">PHZ_c1839</name>
</gene>
<comment type="function">
    <text evidence="1">Peptide chain release factor 2 directs the termination of translation in response to the peptide chain termination codons UGA and UAA.</text>
</comment>
<comment type="subcellular location">
    <subcellularLocation>
        <location evidence="1">Cytoplasm</location>
    </subcellularLocation>
</comment>
<comment type="PTM">
    <text evidence="1">Methylated by PrmC. Methylation increases the termination efficiency of RF2.</text>
</comment>
<comment type="similarity">
    <text evidence="1">Belongs to the prokaryotic/mitochondrial release factor family.</text>
</comment>
<keyword id="KW-0963">Cytoplasm</keyword>
<keyword id="KW-0488">Methylation</keyword>
<keyword id="KW-0648">Protein biosynthesis</keyword>
<keyword id="KW-1185">Reference proteome</keyword>
<reference key="1">
    <citation type="journal article" date="2008" name="BMC Genomics">
        <title>Complete genome of Phenylobacterium zucineum - a novel facultative intracellular bacterium isolated from human erythroleukemia cell line K562.</title>
        <authorList>
            <person name="Luo Y."/>
            <person name="Xu X."/>
            <person name="Ding Z."/>
            <person name="Liu Z."/>
            <person name="Zhang B."/>
            <person name="Yan Z."/>
            <person name="Sun J."/>
            <person name="Hu S."/>
            <person name="Hu X."/>
        </authorList>
    </citation>
    <scope>NUCLEOTIDE SEQUENCE [LARGE SCALE GENOMIC DNA]</scope>
    <source>
        <strain>HLK1</strain>
    </source>
</reference>
<feature type="chain" id="PRO_1000093550" description="Peptide chain release factor 2">
    <location>
        <begin position="1"/>
        <end position="369"/>
    </location>
</feature>
<feature type="modified residue" description="N5-methylglutamine" evidence="1">
    <location>
        <position position="247"/>
    </location>
</feature>
<proteinExistence type="inferred from homology"/>
<dbReference type="EMBL" id="CP000747">
    <property type="protein sequence ID" value="ACG78250.1"/>
    <property type="molecule type" value="Genomic_DNA"/>
</dbReference>
<dbReference type="SMR" id="B4RCR3"/>
<dbReference type="STRING" id="450851.PHZ_c1839"/>
<dbReference type="KEGG" id="pzu:PHZ_c1839"/>
<dbReference type="eggNOG" id="COG1186">
    <property type="taxonomic scope" value="Bacteria"/>
</dbReference>
<dbReference type="HOGENOM" id="CLU_036856_6_0_5"/>
<dbReference type="Proteomes" id="UP000001868">
    <property type="component" value="Chromosome"/>
</dbReference>
<dbReference type="GO" id="GO:0005737">
    <property type="term" value="C:cytoplasm"/>
    <property type="evidence" value="ECO:0007669"/>
    <property type="project" value="UniProtKB-SubCell"/>
</dbReference>
<dbReference type="GO" id="GO:0016149">
    <property type="term" value="F:translation release factor activity, codon specific"/>
    <property type="evidence" value="ECO:0007669"/>
    <property type="project" value="UniProtKB-UniRule"/>
</dbReference>
<dbReference type="FunFam" id="3.30.160.20:FF:000010">
    <property type="entry name" value="Peptide chain release factor 2"/>
    <property type="match status" value="1"/>
</dbReference>
<dbReference type="Gene3D" id="3.30.160.20">
    <property type="match status" value="1"/>
</dbReference>
<dbReference type="Gene3D" id="3.30.70.1660">
    <property type="match status" value="1"/>
</dbReference>
<dbReference type="Gene3D" id="1.20.58.410">
    <property type="entry name" value="Release factor"/>
    <property type="match status" value="1"/>
</dbReference>
<dbReference type="HAMAP" id="MF_00094">
    <property type="entry name" value="Rel_fac_2"/>
    <property type="match status" value="1"/>
</dbReference>
<dbReference type="InterPro" id="IPR005139">
    <property type="entry name" value="PCRF"/>
</dbReference>
<dbReference type="InterPro" id="IPR000352">
    <property type="entry name" value="Pep_chain_release_fac_I"/>
</dbReference>
<dbReference type="InterPro" id="IPR045853">
    <property type="entry name" value="Pep_chain_release_fac_I_sf"/>
</dbReference>
<dbReference type="InterPro" id="IPR004374">
    <property type="entry name" value="PrfB"/>
</dbReference>
<dbReference type="NCBIfam" id="TIGR00020">
    <property type="entry name" value="prfB"/>
    <property type="match status" value="1"/>
</dbReference>
<dbReference type="PANTHER" id="PTHR43116:SF3">
    <property type="entry name" value="CLASS I PEPTIDE CHAIN RELEASE FACTOR"/>
    <property type="match status" value="1"/>
</dbReference>
<dbReference type="PANTHER" id="PTHR43116">
    <property type="entry name" value="PEPTIDE CHAIN RELEASE FACTOR 2"/>
    <property type="match status" value="1"/>
</dbReference>
<dbReference type="Pfam" id="PF03462">
    <property type="entry name" value="PCRF"/>
    <property type="match status" value="1"/>
</dbReference>
<dbReference type="Pfam" id="PF00472">
    <property type="entry name" value="RF-1"/>
    <property type="match status" value="1"/>
</dbReference>
<dbReference type="SMART" id="SM00937">
    <property type="entry name" value="PCRF"/>
    <property type="match status" value="1"/>
</dbReference>
<dbReference type="SUPFAM" id="SSF75620">
    <property type="entry name" value="Release factor"/>
    <property type="match status" value="1"/>
</dbReference>
<dbReference type="PROSITE" id="PS00745">
    <property type="entry name" value="RF_PROK_I"/>
    <property type="match status" value="1"/>
</dbReference>
<accession>B4RCR3</accession>
<protein>
    <recommendedName>
        <fullName evidence="1">Peptide chain release factor 2</fullName>
        <shortName evidence="1">RF-2</shortName>
    </recommendedName>
</protein>
<name>RF2_PHEZH</name>
<sequence length="369" mass="40678">MSRPPRPTSSSRSNCSGGVFDWEPALRKLDELNARVEDPTLWNDPDEAQAVSRERSRLSAQVEAVHGLERDLADALGYAELADEEGDEASLDEARAQLREIKERAARAELEALLSGEADGNDAYVEINSGAGGTESNDWAGMLLRMYTRWAQAHGMSVDVIEETAGEQAGIKSVTLQVKGTNAYGWLKTEAGVHRLVRISPYDSSARRHTSFASVWVYPVIDDNIEIEINPADVRTDTYRASGAGGQHVNKTDSAVRLTHIPTGIAVACQTQRSQHQNRDQAWKMLRARLYELELEKREAAQQALEDQKTDIGWGHQIRSYVLQPYQMVKDLRTEVETSDTQGVLDGDLDAFMGAALAQRVGATRDAAA</sequence>
<evidence type="ECO:0000255" key="1">
    <source>
        <dbReference type="HAMAP-Rule" id="MF_00094"/>
    </source>
</evidence>